<protein>
    <recommendedName>
        <fullName evidence="1">GTPase Obg</fullName>
        <ecNumber evidence="1">3.6.5.-</ecNumber>
    </recommendedName>
    <alternativeName>
        <fullName evidence="1">GTP-binding protein Obg</fullName>
    </alternativeName>
</protein>
<keyword id="KW-0963">Cytoplasm</keyword>
<keyword id="KW-0342">GTP-binding</keyword>
<keyword id="KW-0378">Hydrolase</keyword>
<keyword id="KW-0460">Magnesium</keyword>
<keyword id="KW-0479">Metal-binding</keyword>
<keyword id="KW-0547">Nucleotide-binding</keyword>
<name>OBG_BORRA</name>
<comment type="function">
    <text evidence="1">An essential GTPase which binds GTP, GDP and possibly (p)ppGpp with moderate affinity, with high nucleotide exchange rates and a fairly low GTP hydrolysis rate. Plays a role in control of the cell cycle, stress response, ribosome biogenesis and in those bacteria that undergo differentiation, in morphogenesis control.</text>
</comment>
<comment type="cofactor">
    <cofactor evidence="1">
        <name>Mg(2+)</name>
        <dbReference type="ChEBI" id="CHEBI:18420"/>
    </cofactor>
</comment>
<comment type="subunit">
    <text evidence="1">Monomer.</text>
</comment>
<comment type="subcellular location">
    <subcellularLocation>
        <location evidence="1">Cytoplasm</location>
    </subcellularLocation>
</comment>
<comment type="similarity">
    <text evidence="1">Belongs to the TRAFAC class OBG-HflX-like GTPase superfamily. OBG GTPase family.</text>
</comment>
<feature type="chain" id="PRO_0000385759" description="GTPase Obg">
    <location>
        <begin position="1"/>
        <end position="327"/>
    </location>
</feature>
<feature type="domain" description="Obg" evidence="2">
    <location>
        <begin position="2"/>
        <end position="160"/>
    </location>
</feature>
<feature type="domain" description="OBG-type G" evidence="1">
    <location>
        <begin position="161"/>
        <end position="326"/>
    </location>
</feature>
<feature type="binding site" evidence="1">
    <location>
        <begin position="167"/>
        <end position="174"/>
    </location>
    <ligand>
        <name>GTP</name>
        <dbReference type="ChEBI" id="CHEBI:37565"/>
    </ligand>
</feature>
<feature type="binding site" evidence="1">
    <location>
        <position position="174"/>
    </location>
    <ligand>
        <name>Mg(2+)</name>
        <dbReference type="ChEBI" id="CHEBI:18420"/>
    </ligand>
</feature>
<feature type="binding site" evidence="1">
    <location>
        <begin position="192"/>
        <end position="196"/>
    </location>
    <ligand>
        <name>GTP</name>
        <dbReference type="ChEBI" id="CHEBI:37565"/>
    </ligand>
</feature>
<feature type="binding site" evidence="1">
    <location>
        <position position="194"/>
    </location>
    <ligand>
        <name>Mg(2+)</name>
        <dbReference type="ChEBI" id="CHEBI:18420"/>
    </ligand>
</feature>
<feature type="binding site" evidence="1">
    <location>
        <begin position="213"/>
        <end position="216"/>
    </location>
    <ligand>
        <name>GTP</name>
        <dbReference type="ChEBI" id="CHEBI:37565"/>
    </ligand>
</feature>
<feature type="binding site" evidence="1">
    <location>
        <begin position="280"/>
        <end position="283"/>
    </location>
    <ligand>
        <name>GTP</name>
        <dbReference type="ChEBI" id="CHEBI:37565"/>
    </ligand>
</feature>
<feature type="binding site" evidence="1">
    <location>
        <begin position="307"/>
        <end position="309"/>
    </location>
    <ligand>
        <name>GTP</name>
        <dbReference type="ChEBI" id="CHEBI:37565"/>
    </ligand>
</feature>
<organism>
    <name type="scientific">Borrelia recurrentis (strain A1)</name>
    <dbReference type="NCBI Taxonomy" id="412418"/>
    <lineage>
        <taxon>Bacteria</taxon>
        <taxon>Pseudomonadati</taxon>
        <taxon>Spirochaetota</taxon>
        <taxon>Spirochaetia</taxon>
        <taxon>Spirochaetales</taxon>
        <taxon>Borreliaceae</taxon>
        <taxon>Borrelia</taxon>
    </lineage>
</organism>
<reference key="1">
    <citation type="journal article" date="2008" name="PLoS Genet.">
        <title>The genome of Borrelia recurrentis, the agent of deadly louse-borne relapsing fever, is a degraded subset of tick-borne Borrelia duttonii.</title>
        <authorList>
            <person name="Lescot M."/>
            <person name="Audic S."/>
            <person name="Robert C."/>
            <person name="Nguyen T.T."/>
            <person name="Blanc G."/>
            <person name="Cutler S.J."/>
            <person name="Wincker P."/>
            <person name="Couloux A."/>
            <person name="Claverie J.-M."/>
            <person name="Raoult D."/>
            <person name="Drancourt M."/>
        </authorList>
    </citation>
    <scope>NUCLEOTIDE SEQUENCE [LARGE SCALE GENOMIC DNA]</scope>
    <source>
        <strain>A1</strain>
    </source>
</reference>
<sequence>MHLFKDSLNLIVSSGNGGAGCVSFLREKFKAKGGPDGGDGGRGGDVIFKVKSNLKTLSLYRNGQKLSASNGKSGMGLKKSGAAGSDLIIFVPPNTSIYDADSNCMLFELKNFNDEVVVLKGGRGGLGNVNFKSSTKRTPRFAQPGESGLTLNLRLELSLIADVGLVGLPNAGKSSLISKITASRSKVANYPFTTKIPHFGVVRVSYNDLIIADLPGIIEGASKGIGLGFEFLRHISKTQILVFLIDVSSNDFMSAYDILINELRVYDIGLLKKKRIIVASKLDLEGATENFNQLKSILSEERVLGISIYDNIGINELVSEFFSLAKI</sequence>
<evidence type="ECO:0000255" key="1">
    <source>
        <dbReference type="HAMAP-Rule" id="MF_01454"/>
    </source>
</evidence>
<evidence type="ECO:0000255" key="2">
    <source>
        <dbReference type="PROSITE-ProRule" id="PRU01231"/>
    </source>
</evidence>
<accession>B5RQB8</accession>
<gene>
    <name evidence="1" type="primary">obg</name>
    <name type="ordered locus">BRE_789</name>
</gene>
<proteinExistence type="inferred from homology"/>
<dbReference type="EC" id="3.6.5.-" evidence="1"/>
<dbReference type="EMBL" id="CP000993">
    <property type="protein sequence ID" value="ACH95002.1"/>
    <property type="molecule type" value="Genomic_DNA"/>
</dbReference>
<dbReference type="RefSeq" id="WP_012539161.1">
    <property type="nucleotide sequence ID" value="NC_011244.1"/>
</dbReference>
<dbReference type="SMR" id="B5RQB8"/>
<dbReference type="KEGG" id="bre:BRE_789"/>
<dbReference type="HOGENOM" id="CLU_011747_2_0_12"/>
<dbReference type="Proteomes" id="UP000000612">
    <property type="component" value="Chromosome"/>
</dbReference>
<dbReference type="GO" id="GO:0005737">
    <property type="term" value="C:cytoplasm"/>
    <property type="evidence" value="ECO:0007669"/>
    <property type="project" value="UniProtKB-SubCell"/>
</dbReference>
<dbReference type="GO" id="GO:0005525">
    <property type="term" value="F:GTP binding"/>
    <property type="evidence" value="ECO:0007669"/>
    <property type="project" value="UniProtKB-UniRule"/>
</dbReference>
<dbReference type="GO" id="GO:0003924">
    <property type="term" value="F:GTPase activity"/>
    <property type="evidence" value="ECO:0007669"/>
    <property type="project" value="UniProtKB-UniRule"/>
</dbReference>
<dbReference type="GO" id="GO:0000287">
    <property type="term" value="F:magnesium ion binding"/>
    <property type="evidence" value="ECO:0007669"/>
    <property type="project" value="InterPro"/>
</dbReference>
<dbReference type="GO" id="GO:0042254">
    <property type="term" value="P:ribosome biogenesis"/>
    <property type="evidence" value="ECO:0007669"/>
    <property type="project" value="UniProtKB-UniRule"/>
</dbReference>
<dbReference type="CDD" id="cd01898">
    <property type="entry name" value="Obg"/>
    <property type="match status" value="1"/>
</dbReference>
<dbReference type="FunFam" id="2.70.210.12:FF:000001">
    <property type="entry name" value="GTPase Obg"/>
    <property type="match status" value="1"/>
</dbReference>
<dbReference type="Gene3D" id="2.70.210.12">
    <property type="entry name" value="GTP1/OBG domain"/>
    <property type="match status" value="1"/>
</dbReference>
<dbReference type="Gene3D" id="3.40.50.300">
    <property type="entry name" value="P-loop containing nucleotide triphosphate hydrolases"/>
    <property type="match status" value="1"/>
</dbReference>
<dbReference type="HAMAP" id="MF_01454">
    <property type="entry name" value="GTPase_Obg"/>
    <property type="match status" value="1"/>
</dbReference>
<dbReference type="InterPro" id="IPR031167">
    <property type="entry name" value="G_OBG"/>
</dbReference>
<dbReference type="InterPro" id="IPR006073">
    <property type="entry name" value="GTP-bd"/>
</dbReference>
<dbReference type="InterPro" id="IPR014100">
    <property type="entry name" value="GTP-bd_Obg/CgtA"/>
</dbReference>
<dbReference type="InterPro" id="IPR006074">
    <property type="entry name" value="GTP1-OBG_CS"/>
</dbReference>
<dbReference type="InterPro" id="IPR006169">
    <property type="entry name" value="GTP1_OBG_dom"/>
</dbReference>
<dbReference type="InterPro" id="IPR036726">
    <property type="entry name" value="GTP1_OBG_dom_sf"/>
</dbReference>
<dbReference type="InterPro" id="IPR045086">
    <property type="entry name" value="OBG_GTPase"/>
</dbReference>
<dbReference type="InterPro" id="IPR027417">
    <property type="entry name" value="P-loop_NTPase"/>
</dbReference>
<dbReference type="InterPro" id="IPR005225">
    <property type="entry name" value="Small_GTP-bd"/>
</dbReference>
<dbReference type="NCBIfam" id="TIGR02729">
    <property type="entry name" value="Obg_CgtA"/>
    <property type="match status" value="1"/>
</dbReference>
<dbReference type="NCBIfam" id="NF008956">
    <property type="entry name" value="PRK12299.1"/>
    <property type="match status" value="1"/>
</dbReference>
<dbReference type="NCBIfam" id="TIGR00231">
    <property type="entry name" value="small_GTP"/>
    <property type="match status" value="1"/>
</dbReference>
<dbReference type="PANTHER" id="PTHR11702">
    <property type="entry name" value="DEVELOPMENTALLY REGULATED GTP-BINDING PROTEIN-RELATED"/>
    <property type="match status" value="1"/>
</dbReference>
<dbReference type="PANTHER" id="PTHR11702:SF31">
    <property type="entry name" value="MITOCHONDRIAL RIBOSOME-ASSOCIATED GTPASE 2"/>
    <property type="match status" value="1"/>
</dbReference>
<dbReference type="Pfam" id="PF01018">
    <property type="entry name" value="GTP1_OBG"/>
    <property type="match status" value="1"/>
</dbReference>
<dbReference type="Pfam" id="PF01926">
    <property type="entry name" value="MMR_HSR1"/>
    <property type="match status" value="1"/>
</dbReference>
<dbReference type="PIRSF" id="PIRSF002401">
    <property type="entry name" value="GTP_bd_Obg/CgtA"/>
    <property type="match status" value="1"/>
</dbReference>
<dbReference type="PRINTS" id="PR00326">
    <property type="entry name" value="GTP1OBG"/>
</dbReference>
<dbReference type="SUPFAM" id="SSF82051">
    <property type="entry name" value="Obg GTP-binding protein N-terminal domain"/>
    <property type="match status" value="1"/>
</dbReference>
<dbReference type="SUPFAM" id="SSF52540">
    <property type="entry name" value="P-loop containing nucleoside triphosphate hydrolases"/>
    <property type="match status" value="1"/>
</dbReference>
<dbReference type="PROSITE" id="PS51710">
    <property type="entry name" value="G_OBG"/>
    <property type="match status" value="1"/>
</dbReference>
<dbReference type="PROSITE" id="PS00905">
    <property type="entry name" value="GTP1_OBG"/>
    <property type="match status" value="1"/>
</dbReference>
<dbReference type="PROSITE" id="PS51883">
    <property type="entry name" value="OBG"/>
    <property type="match status" value="1"/>
</dbReference>